<keyword id="KW-0072">Autophagy</keyword>
<keyword id="KW-0963">Cytoplasm</keyword>
<keyword id="KW-1017">Isopeptide bond</keyword>
<keyword id="KW-0653">Protein transport</keyword>
<keyword id="KW-1185">Reference proteome</keyword>
<keyword id="KW-0808">Transferase</keyword>
<keyword id="KW-0813">Transport</keyword>
<keyword id="KW-0832">Ubl conjugation</keyword>
<keyword id="KW-0833">Ubl conjugation pathway</keyword>
<proteinExistence type="evidence at transcript level"/>
<accession>Q6GQE7</accession>
<feature type="chain" id="PRO_0000213573" description="Ubiquitin-like-conjugating enzyme ATG3">
    <location>
        <begin position="1"/>
        <end position="313"/>
    </location>
</feature>
<feature type="short sequence motif" description="Membrane-curvature-sensing motif" evidence="1">
    <location>
        <begin position="4"/>
        <end position="19"/>
    </location>
</feature>
<feature type="short sequence motif" description="LIR motif" evidence="2">
    <location>
        <begin position="104"/>
        <end position="110"/>
    </location>
</feature>
<feature type="active site" description="Glycyl thioester intermediate" evidence="2">
    <location>
        <position position="263"/>
    </location>
</feature>
<feature type="cross-link" description="Glycyl lysine isopeptide (Lys-Gly) (interchain with G-Cter in ATG12)" evidence="1">
    <location>
        <position position="242"/>
    </location>
</feature>
<comment type="function">
    <text evidence="1 2">E2 conjugating enzyme that catalyzes the covalent conjugation of the C-terminal Gly of ATG8-like proteins (GABARAP, GABARAPL1, GABARAPL2 or MAP1LC3A) to the amino group of phosphatidylethanolamine (PE)-containing lipids in the membrane resulting in membrane-bound ATG8-like proteins which is one of the key steps in the development of autophagic isolation membranes during autophagosome formation. Cycles back and forth between binding to ATG7 for loading with the ATG8-like proteins and binding to E3 enzyme, composed of ATG12, ATG5 and ATG16L1 to promote ATG8-like proteins lipidation (By similarity). Also plays a role as a membrane curvature sensor that facilitates LC3/GABARAP lipidation by sensing local membrane stress associated with lipid-packing defects as occurs with high molar proportions of conical lipids or strident membrane curvature (By similarity). Interacts with negatively-charged membranes promoting membrane tethering and enhancing LC3/GABARAP lipidation (By similarity). Also acts as an autocatalytic E2-like enzyme by catalyzing the conjugation of ATG12 to itself in an ATG7-dependent manner, this complex thus formed, plays a role in mitochondrial homeostasis but not in autophagy (By similarity).</text>
</comment>
<comment type="subunit">
    <text evidence="2">Homdimer. Interacts with ATG7; this interaction forms an E1-E2 complex that is essential for the transfer of GABARAP thioester from ATG7 to ATG3 and disrupts interaction with the E3 enzyme complex. Interacts with ATG12; this interaction is ATG7-dependent, essential for phosphatidylethanolamine (PE)-conjugated ATG8-like proteins formation and also mediates the autoconjugation of ATG12 on ATG3. Interacts with the E3 enzyme complex composed of 4 sets of ATG12-ATG5 and ATG16L1 (400 kDa); this interaction disrupts interaction with ATG7 and promotes ATG8-like proteins lipidation. Interacts with GABARAP and MAP1LC3A.</text>
</comment>
<comment type="subcellular location">
    <subcellularLocation>
        <location evidence="2">Cytoplasm</location>
    </subcellularLocation>
</comment>
<comment type="domain">
    <text evidence="1">The membrane-curvature-sensing motif targets curved membranes.</text>
</comment>
<comment type="domain">
    <text evidence="2">The N-terminal region works in concert with its geometry-selective amphipathic helix (AH) to promote LC3-PE conjugation activity only on the target membrane.</text>
</comment>
<comment type="domain">
    <text evidence="2">The LC3 interacting regions (LIR) motif mediates interaction with GABARAP and MAP1LC3A in a beta-sheet conformation-dependent manner. The LIR motif is required for LC3 lipidation and ATG3~LC3 thioester formation.</text>
</comment>
<comment type="PTM">
    <text evidence="1">Conjugated to ATG12 at Lys-242. ATG12-conjugation plays a role in regulation of mitochondrial homeostasis and cell death, while it is not involved in phosphatidylethanolamine-conjugation to ATG8-like proteins and autophagy.</text>
</comment>
<comment type="similarity">
    <text evidence="3">Belongs to the ATG3 family.</text>
</comment>
<reference key="1">
    <citation type="submission" date="2004-06" db="EMBL/GenBank/DDBJ databases">
        <authorList>
            <consortium name="NIH - Xenopus Gene Collection (XGC) project"/>
        </authorList>
    </citation>
    <scope>NUCLEOTIDE SEQUENCE [LARGE SCALE MRNA]</scope>
    <source>
        <tissue>Spleen</tissue>
    </source>
</reference>
<sequence>MQNVFNTVKGKALEVAEYLTPVLKESKFKETGVITPEEFLAAGDHLVHHCPTWQWSAGEESKIKPYLPNDKQFLMTKNVPCYKRCKQMEYSDEQEAIIEEDDGDGGWVDTFHHTGLSGVTEAVKEITLETQDCGKTTDNIAVCDDDDDDEGEAADMEDYEESGLLENDDATVDTSKIKEACKPKADLGGEDAILQTRTYDLYITYDKYYQTPRLWLFGYDEQRRPLAVENMYEDISQDHVKKTVTIENHPHLPPPPMCSVHPCRHAEVMKKIIETVAEGGGELGVHMYLLIFLKFVQAVIPTIEYDYTRHFTM</sequence>
<name>ATG3_XENLA</name>
<gene>
    <name evidence="2" type="primary">atg3</name>
    <name type="synonym">apg3l</name>
</gene>
<protein>
    <recommendedName>
        <fullName evidence="2">Ubiquitin-like-conjugating enzyme ATG3</fullName>
        <ecNumber evidence="2">2.3.2.-</ecNumber>
    </recommendedName>
    <alternativeName>
        <fullName>Autophagy-related protein 3</fullName>
        <shortName>APG3-like</shortName>
    </alternativeName>
</protein>
<dbReference type="EC" id="2.3.2.-" evidence="2"/>
<dbReference type="EMBL" id="BC072798">
    <property type="protein sequence ID" value="AAH72798.1"/>
    <property type="molecule type" value="mRNA"/>
</dbReference>
<dbReference type="RefSeq" id="NP_001085459.1">
    <property type="nucleotide sequence ID" value="NM_001091990.2"/>
</dbReference>
<dbReference type="SMR" id="Q6GQE7"/>
<dbReference type="DNASU" id="443885"/>
<dbReference type="GeneID" id="443885"/>
<dbReference type="KEGG" id="xla:443885"/>
<dbReference type="AGR" id="Xenbase:XB-GENE-953272"/>
<dbReference type="CTD" id="443885"/>
<dbReference type="Xenbase" id="XB-GENE-953272">
    <property type="gene designation" value="atg3.S"/>
</dbReference>
<dbReference type="OrthoDB" id="1584384at2759"/>
<dbReference type="Proteomes" id="UP000186698">
    <property type="component" value="Chromosome 2S"/>
</dbReference>
<dbReference type="Bgee" id="443885">
    <property type="expression patterns" value="Expressed in gastrula and 19 other cell types or tissues"/>
</dbReference>
<dbReference type="GO" id="GO:0005829">
    <property type="term" value="C:cytosol"/>
    <property type="evidence" value="ECO:0000318"/>
    <property type="project" value="GO_Central"/>
</dbReference>
<dbReference type="GO" id="GO:0000407">
    <property type="term" value="C:phagophore assembly site"/>
    <property type="evidence" value="ECO:0000318"/>
    <property type="project" value="GO_Central"/>
</dbReference>
<dbReference type="GO" id="GO:0019777">
    <property type="term" value="F:Atg12 transferase activity"/>
    <property type="evidence" value="ECO:0000250"/>
    <property type="project" value="UniProtKB"/>
</dbReference>
<dbReference type="GO" id="GO:0141046">
    <property type="term" value="F:Atg8-family conjugating enzyme activity"/>
    <property type="evidence" value="ECO:0000250"/>
    <property type="project" value="UniProtKB"/>
</dbReference>
<dbReference type="GO" id="GO:0019776">
    <property type="term" value="F:Atg8-family ligase activity"/>
    <property type="evidence" value="ECO:0000250"/>
    <property type="project" value="UniProtKB"/>
</dbReference>
<dbReference type="GO" id="GO:0000045">
    <property type="term" value="P:autophagosome assembly"/>
    <property type="evidence" value="ECO:0000250"/>
    <property type="project" value="UniProtKB"/>
</dbReference>
<dbReference type="GO" id="GO:0006914">
    <property type="term" value="P:autophagy"/>
    <property type="evidence" value="ECO:0000250"/>
    <property type="project" value="UniProtKB"/>
</dbReference>
<dbReference type="GO" id="GO:0000422">
    <property type="term" value="P:autophagy of mitochondrion"/>
    <property type="evidence" value="ECO:0000318"/>
    <property type="project" value="GO_Central"/>
</dbReference>
<dbReference type="GO" id="GO:0061723">
    <property type="term" value="P:glycophagy"/>
    <property type="evidence" value="ECO:0000318"/>
    <property type="project" value="GO_Central"/>
</dbReference>
<dbReference type="GO" id="GO:0043653">
    <property type="term" value="P:mitochondrial fragmentation involved in apoptotic process"/>
    <property type="evidence" value="ECO:0000250"/>
    <property type="project" value="UniProtKB"/>
</dbReference>
<dbReference type="GO" id="GO:0044804">
    <property type="term" value="P:nucleophagy"/>
    <property type="evidence" value="ECO:0000318"/>
    <property type="project" value="GO_Central"/>
</dbReference>
<dbReference type="GO" id="GO:0015031">
    <property type="term" value="P:protein transport"/>
    <property type="evidence" value="ECO:0007669"/>
    <property type="project" value="UniProtKB-KW"/>
</dbReference>
<dbReference type="FunFam" id="3.30.1460.50:FF:000001">
    <property type="entry name" value="Autophagy-related protein 3"/>
    <property type="match status" value="1"/>
</dbReference>
<dbReference type="Gene3D" id="3.30.1460.50">
    <property type="match status" value="1"/>
</dbReference>
<dbReference type="InterPro" id="IPR007135">
    <property type="entry name" value="Atg3/Atg10"/>
</dbReference>
<dbReference type="PANTHER" id="PTHR12866">
    <property type="entry name" value="UBIQUITIN-LIKE-CONJUGATING ENZYME ATG3"/>
    <property type="match status" value="1"/>
</dbReference>
<dbReference type="PANTHER" id="PTHR12866:SF2">
    <property type="entry name" value="UBIQUITIN-LIKE-CONJUGATING ENZYME ATG3"/>
    <property type="match status" value="1"/>
</dbReference>
<dbReference type="Pfam" id="PF03987">
    <property type="entry name" value="Autophagy_act_C"/>
    <property type="match status" value="1"/>
</dbReference>
<organism>
    <name type="scientific">Xenopus laevis</name>
    <name type="common">African clawed frog</name>
    <dbReference type="NCBI Taxonomy" id="8355"/>
    <lineage>
        <taxon>Eukaryota</taxon>
        <taxon>Metazoa</taxon>
        <taxon>Chordata</taxon>
        <taxon>Craniata</taxon>
        <taxon>Vertebrata</taxon>
        <taxon>Euteleostomi</taxon>
        <taxon>Amphibia</taxon>
        <taxon>Batrachia</taxon>
        <taxon>Anura</taxon>
        <taxon>Pipoidea</taxon>
        <taxon>Pipidae</taxon>
        <taxon>Xenopodinae</taxon>
        <taxon>Xenopus</taxon>
        <taxon>Xenopus</taxon>
    </lineage>
</organism>
<evidence type="ECO:0000250" key="1">
    <source>
        <dbReference type="UniProtKB" id="Q9CPX6"/>
    </source>
</evidence>
<evidence type="ECO:0000250" key="2">
    <source>
        <dbReference type="UniProtKB" id="Q9NT62"/>
    </source>
</evidence>
<evidence type="ECO:0000305" key="3"/>